<name>PGSA_ECOUT</name>
<feature type="chain" id="PRO_0000301861" description="CDP-diacylglycerol--glycerol-3-phosphate 3-phosphatidyltransferase">
    <location>
        <begin position="1"/>
        <end position="182"/>
    </location>
</feature>
<feature type="topological domain" description="Cytoplasmic" evidence="1">
    <location>
        <begin position="1"/>
        <end position="12"/>
    </location>
</feature>
<feature type="transmembrane region" description="Helical" evidence="1">
    <location>
        <begin position="13"/>
        <end position="37"/>
    </location>
</feature>
<feature type="topological domain" description="Periplasmic" evidence="1">
    <location>
        <begin position="38"/>
        <end position="60"/>
    </location>
</feature>
<feature type="transmembrane region" description="Helical" evidence="1">
    <location>
        <begin position="61"/>
        <end position="81"/>
    </location>
</feature>
<feature type="topological domain" description="Cytoplasmic" evidence="1">
    <location>
        <begin position="82"/>
        <end position="86"/>
    </location>
</feature>
<feature type="transmembrane region" description="Helical" evidence="1">
    <location>
        <begin position="87"/>
        <end position="107"/>
    </location>
</feature>
<feature type="topological domain" description="Periplasmic" evidence="1">
    <location>
        <begin position="108"/>
        <end position="145"/>
    </location>
</feature>
<feature type="transmembrane region" description="Helical" evidence="1">
    <location>
        <begin position="146"/>
        <end position="168"/>
    </location>
</feature>
<feature type="topological domain" description="Cytoplasmic" evidence="1">
    <location>
        <begin position="169"/>
        <end position="181"/>
    </location>
</feature>
<comment type="function">
    <text evidence="1">Catalyzes the conversion of cytidine diphosphate diacylglycerol (CDP-DG) and glycerol 3-phosphate into phosphatidylglycerol. Essential for the synthesis of anionic phospholipids, thereby playing a role in balancing the ratio of zwitterionic and anionic phospholipids, which is thought to be important for normal membrane function.</text>
</comment>
<comment type="catalytic activity">
    <reaction evidence="1">
        <text>a CDP-1,2-diacyl-sn-glycerol + sn-glycerol 3-phosphate = a 1,2-diacyl-sn-glycero-3-phospho-(1'-sn-glycero-3'-phosphate) + CMP + H(+)</text>
        <dbReference type="Rhea" id="RHEA:12593"/>
        <dbReference type="ChEBI" id="CHEBI:15378"/>
        <dbReference type="ChEBI" id="CHEBI:57597"/>
        <dbReference type="ChEBI" id="CHEBI:58332"/>
        <dbReference type="ChEBI" id="CHEBI:60110"/>
        <dbReference type="ChEBI" id="CHEBI:60377"/>
        <dbReference type="EC" id="2.7.8.5"/>
    </reaction>
</comment>
<comment type="pathway">
    <text evidence="1">Phospholipid metabolism; phosphatidylglycerol biosynthesis; phosphatidylglycerol from CDP-diacylglycerol: step 1/2.</text>
</comment>
<comment type="subcellular location">
    <subcellularLocation>
        <location evidence="1">Cell inner membrane</location>
        <topology evidence="1">Multi-pass membrane protein</topology>
    </subcellularLocation>
</comment>
<comment type="similarity">
    <text evidence="1">Belongs to the CDP-alcohol phosphatidyltransferase class-I family.</text>
</comment>
<evidence type="ECO:0000255" key="1">
    <source>
        <dbReference type="HAMAP-Rule" id="MF_01437"/>
    </source>
</evidence>
<reference key="1">
    <citation type="journal article" date="2006" name="Proc. Natl. Acad. Sci. U.S.A.">
        <title>Identification of genes subject to positive selection in uropathogenic strains of Escherichia coli: a comparative genomics approach.</title>
        <authorList>
            <person name="Chen S.L."/>
            <person name="Hung C.-S."/>
            <person name="Xu J."/>
            <person name="Reigstad C.S."/>
            <person name="Magrini V."/>
            <person name="Sabo A."/>
            <person name="Blasiar D."/>
            <person name="Bieri T."/>
            <person name="Meyer R.R."/>
            <person name="Ozersky P."/>
            <person name="Armstrong J.R."/>
            <person name="Fulton R.S."/>
            <person name="Latreille J.P."/>
            <person name="Spieth J."/>
            <person name="Hooton T.M."/>
            <person name="Mardis E.R."/>
            <person name="Hultgren S.J."/>
            <person name="Gordon J.I."/>
        </authorList>
    </citation>
    <scope>NUCLEOTIDE SEQUENCE [LARGE SCALE GENOMIC DNA]</scope>
    <source>
        <strain>UTI89 / UPEC</strain>
    </source>
</reference>
<keyword id="KW-0997">Cell inner membrane</keyword>
<keyword id="KW-1003">Cell membrane</keyword>
<keyword id="KW-0444">Lipid biosynthesis</keyword>
<keyword id="KW-0443">Lipid metabolism</keyword>
<keyword id="KW-0472">Membrane</keyword>
<keyword id="KW-0594">Phospholipid biosynthesis</keyword>
<keyword id="KW-1208">Phospholipid metabolism</keyword>
<keyword id="KW-0808">Transferase</keyword>
<keyword id="KW-0812">Transmembrane</keyword>
<keyword id="KW-1133">Transmembrane helix</keyword>
<organism>
    <name type="scientific">Escherichia coli (strain UTI89 / UPEC)</name>
    <dbReference type="NCBI Taxonomy" id="364106"/>
    <lineage>
        <taxon>Bacteria</taxon>
        <taxon>Pseudomonadati</taxon>
        <taxon>Pseudomonadota</taxon>
        <taxon>Gammaproteobacteria</taxon>
        <taxon>Enterobacterales</taxon>
        <taxon>Enterobacteriaceae</taxon>
        <taxon>Escherichia</taxon>
    </lineage>
</organism>
<dbReference type="EC" id="2.7.8.5" evidence="1"/>
<dbReference type="EMBL" id="CP000243">
    <property type="protein sequence ID" value="ABE07586.1"/>
    <property type="molecule type" value="Genomic_DNA"/>
</dbReference>
<dbReference type="RefSeq" id="WP_001160187.1">
    <property type="nucleotide sequence ID" value="NZ_CP064825.1"/>
</dbReference>
<dbReference type="SMR" id="Q1RAM8"/>
<dbReference type="GeneID" id="93776217"/>
<dbReference type="KEGG" id="eci:UTI89_C2113"/>
<dbReference type="HOGENOM" id="CLU_051314_2_1_6"/>
<dbReference type="UniPathway" id="UPA00084">
    <property type="reaction ID" value="UER00503"/>
</dbReference>
<dbReference type="Proteomes" id="UP000001952">
    <property type="component" value="Chromosome"/>
</dbReference>
<dbReference type="GO" id="GO:0005886">
    <property type="term" value="C:plasma membrane"/>
    <property type="evidence" value="ECO:0007669"/>
    <property type="project" value="UniProtKB-SubCell"/>
</dbReference>
<dbReference type="GO" id="GO:0008444">
    <property type="term" value="F:CDP-diacylglycerol-glycerol-3-phosphate 3-phosphatidyltransferase activity"/>
    <property type="evidence" value="ECO:0007669"/>
    <property type="project" value="UniProtKB-UniRule"/>
</dbReference>
<dbReference type="GO" id="GO:0006655">
    <property type="term" value="P:phosphatidylglycerol biosynthetic process"/>
    <property type="evidence" value="ECO:0007669"/>
    <property type="project" value="UniProtKB-UniRule"/>
</dbReference>
<dbReference type="FunFam" id="1.20.120.1760:FF:000001">
    <property type="entry name" value="CDP-diacylglycerol--glycerol-3-phosphate 3-phosphatidyltransferase"/>
    <property type="match status" value="1"/>
</dbReference>
<dbReference type="Gene3D" id="1.20.120.1760">
    <property type="match status" value="1"/>
</dbReference>
<dbReference type="HAMAP" id="MF_01437">
    <property type="entry name" value="PgsA"/>
    <property type="match status" value="1"/>
</dbReference>
<dbReference type="InterPro" id="IPR050324">
    <property type="entry name" value="CDP-alcohol_PTase-I"/>
</dbReference>
<dbReference type="InterPro" id="IPR000462">
    <property type="entry name" value="CDP-OH_P_trans"/>
</dbReference>
<dbReference type="InterPro" id="IPR043130">
    <property type="entry name" value="CDP-OH_PTrfase_TM_dom"/>
</dbReference>
<dbReference type="InterPro" id="IPR048254">
    <property type="entry name" value="CDP_ALCOHOL_P_TRANSF_CS"/>
</dbReference>
<dbReference type="InterPro" id="IPR023762">
    <property type="entry name" value="PGP_synthase_bac"/>
</dbReference>
<dbReference type="InterPro" id="IPR004570">
    <property type="entry name" value="Phosphatidylglycerol_P_synth"/>
</dbReference>
<dbReference type="NCBIfam" id="TIGR00560">
    <property type="entry name" value="pgsA"/>
    <property type="match status" value="1"/>
</dbReference>
<dbReference type="NCBIfam" id="NF008090">
    <property type="entry name" value="PRK10832.1"/>
    <property type="match status" value="1"/>
</dbReference>
<dbReference type="PANTHER" id="PTHR14269:SF62">
    <property type="entry name" value="CDP-DIACYLGLYCEROL--GLYCEROL-3-PHOSPHATE 3-PHOSPHATIDYLTRANSFERASE 1, CHLOROPLASTIC"/>
    <property type="match status" value="1"/>
</dbReference>
<dbReference type="PANTHER" id="PTHR14269">
    <property type="entry name" value="CDP-DIACYLGLYCEROL--GLYCEROL-3-PHOSPHATE 3-PHOSPHATIDYLTRANSFERASE-RELATED"/>
    <property type="match status" value="1"/>
</dbReference>
<dbReference type="Pfam" id="PF01066">
    <property type="entry name" value="CDP-OH_P_transf"/>
    <property type="match status" value="1"/>
</dbReference>
<dbReference type="PIRSF" id="PIRSF000847">
    <property type="entry name" value="Phos_ph_gly_syn"/>
    <property type="match status" value="1"/>
</dbReference>
<dbReference type="PROSITE" id="PS00379">
    <property type="entry name" value="CDP_ALCOHOL_P_TRANSF"/>
    <property type="match status" value="1"/>
</dbReference>
<proteinExistence type="inferred from homology"/>
<protein>
    <recommendedName>
        <fullName evidence="1">CDP-diacylglycerol--glycerol-3-phosphate 3-phosphatidyltransferase</fullName>
        <ecNumber evidence="1">2.7.8.5</ecNumber>
    </recommendedName>
    <alternativeName>
        <fullName evidence="1">Phosphatidylglycerophosphate synthase</fullName>
        <shortName evidence="1">PGP synthase</shortName>
    </alternativeName>
</protein>
<sequence length="182" mass="20701">MQFNIPTLLTLFRVILIPFFVLVFYLPVTWSPFAAALIFCVAAVTDWFDGFLARRWNQSTRFGAFLDPVADKVLVAIAMVLVTEHYHSWWVTLPAATMIAREIIISALREWMAELGKRSSVAVSWIGKVKTTAQMVALAWLLWRPNIWVEYAGIALFFVAAVLTLWSMLQYLSAARADLLDQ</sequence>
<accession>Q1RAM8</accession>
<gene>
    <name evidence="1" type="primary">pgsA</name>
    <name type="ordered locus">UTI89_C2113</name>
</gene>